<proteinExistence type="evidence at transcript level"/>
<sequence>MEVVPAEVNSLLPDDIMDTAITLVDEDSIEAVIVSSPIPMETELEEIVNINSTGDSTATPISTEPITVYSNHTNQVAVNTTVSKADSNTTVKPAFPSGLQKLGAQTPVTISANQIILNKVSQTSDLKLGNQTLKPDGQKLILTTLGKSGSPIVLALPHSQLPQAQKVTAQAQPGDAKLPPQQIKVVTIGGRPEVKPVIGVSALTPGSQLINTTTQPSVLQTQQLKTVQIAKKPRTPTSGPVITKLIFAKPINSKAVTGQTTQASPPVVTGRVLSQSTPGTPSKTITISESGVIGSTLNSTTQTPNKIAISPLKSPNKTVKSAVQTITVGGMSTSQFKTIIPLATAPNVQQIQVPGSKFHYVRLVTATTASSSAQPVSQSPSVNTQPLQQAKPVVVNTTPVRMSVPFVQAQAVKQVVPKPINSTSQIVTTSQPQQRLIMPATPLPQIQPNLTNLPPGTVLAPAPGTGNVGYAVLPAQYVTQLQQSSYVSIASNSNFTGTSGIQTQARLPFNGIIPSESTSRPRKPCNCTKSLCLKLYCDCFANGEFCNNCNCTNCYNNLEHENERQKAIKACLDRNPEAFKPKIGKGKEGESDRRHSKGCNCKRSGCLKNYCECYEAKIMCSSICKCIGCKNFEESPERKTLMHLADAAEVRVQQQTAAKTKLSSQISDLLTRPTPALNSAGGKLPFTFVTKEVAEATCNCLLAQAEQADKKGKSKAAAERMILEEFGRCLMSVINSAGKAKSDPCAMHC</sequence>
<dbReference type="EMBL" id="AK220225">
    <property type="protein sequence ID" value="BAD90150.1"/>
    <property type="status" value="ALT_INIT"/>
    <property type="molecule type" value="mRNA"/>
</dbReference>
<dbReference type="EMBL" id="AK028016">
    <property type="protein sequence ID" value="BAC25700.1"/>
    <property type="molecule type" value="mRNA"/>
</dbReference>
<dbReference type="EMBL" id="AK029288">
    <property type="protein sequence ID" value="BAC26373.1"/>
    <property type="molecule type" value="mRNA"/>
</dbReference>
<dbReference type="EMBL" id="AK134320">
    <property type="protein sequence ID" value="BAE22096.1"/>
    <property type="molecule type" value="mRNA"/>
</dbReference>
<dbReference type="EMBL" id="BC106126">
    <property type="protein sequence ID" value="AAI06127.1"/>
    <property type="status" value="ALT_SEQ"/>
    <property type="molecule type" value="mRNA"/>
</dbReference>
<dbReference type="EMBL" id="BC125580">
    <property type="protein sequence ID" value="AAI25581.1"/>
    <property type="molecule type" value="mRNA"/>
</dbReference>
<dbReference type="CCDS" id="CCDS19462.2">
    <molecule id="Q571G4-1"/>
</dbReference>
<dbReference type="RefSeq" id="NP_001108482.1">
    <molecule id="Q571G4-1"/>
    <property type="nucleotide sequence ID" value="NM_001115010.1"/>
</dbReference>
<dbReference type="RefSeq" id="NP_001346843.1">
    <molecule id="Q571G4-2"/>
    <property type="nucleotide sequence ID" value="NM_001359914.2"/>
</dbReference>
<dbReference type="RefSeq" id="NP_001412778.1">
    <molecule id="Q571G4-1"/>
    <property type="nucleotide sequence ID" value="NM_001425849.1"/>
</dbReference>
<dbReference type="RefSeq" id="NP_766302.2">
    <molecule id="Q571G4-1"/>
    <property type="nucleotide sequence ID" value="NM_172714.5"/>
</dbReference>
<dbReference type="RefSeq" id="XP_006534947.1">
    <property type="nucleotide sequence ID" value="XM_006534884.3"/>
</dbReference>
<dbReference type="RefSeq" id="XP_006534949.1">
    <property type="nucleotide sequence ID" value="XM_006534886.3"/>
</dbReference>
<dbReference type="SMR" id="Q571G4"/>
<dbReference type="BioGRID" id="231129">
    <property type="interactions" value="13"/>
</dbReference>
<dbReference type="FunCoup" id="Q571G4">
    <property type="interactions" value="3696"/>
</dbReference>
<dbReference type="IntAct" id="Q571G4">
    <property type="interactions" value="10"/>
</dbReference>
<dbReference type="STRING" id="10090.ENSMUSP00000123425"/>
<dbReference type="GlyGen" id="Q571G4">
    <property type="glycosylation" value="18 sites, 1 N-linked glycan (1 site), 1 O-linked glycan (15 sites)"/>
</dbReference>
<dbReference type="iPTMnet" id="Q571G4"/>
<dbReference type="PhosphoSitePlus" id="Q571G4"/>
<dbReference type="jPOST" id="Q571G4"/>
<dbReference type="PaxDb" id="10090-ENSMUSP00000123425"/>
<dbReference type="PeptideAtlas" id="Q571G4"/>
<dbReference type="ProteomicsDB" id="291954">
    <molecule id="Q571G4-1"/>
</dbReference>
<dbReference type="ProteomicsDB" id="291955">
    <molecule id="Q571G4-2"/>
</dbReference>
<dbReference type="ProteomicsDB" id="291956">
    <molecule id="Q571G4-3"/>
</dbReference>
<dbReference type="Pumba" id="Q571G4"/>
<dbReference type="Antibodypedia" id="55895">
    <property type="antibodies" value="57 antibodies from 18 providers"/>
</dbReference>
<dbReference type="DNASU" id="231506"/>
<dbReference type="Ensembl" id="ENSMUST00000239512.1">
    <molecule id="Q571G4-1"/>
    <property type="protein sequence ID" value="ENSMUSP00000159391.2"/>
    <property type="gene ID" value="ENSMUSG00000118665.1"/>
</dbReference>
<dbReference type="Ensembl" id="ENSMUST00000239513.1">
    <molecule id="Q571G4-1"/>
    <property type="protein sequence ID" value="ENSMUSP00000159392.2"/>
    <property type="gene ID" value="ENSMUSG00000118665.1"/>
</dbReference>
<dbReference type="GeneID" id="231506"/>
<dbReference type="KEGG" id="mmu:231506"/>
<dbReference type="UCSC" id="uc008yhn.3">
    <molecule id="Q571G4-1"/>
    <property type="organism name" value="mouse"/>
</dbReference>
<dbReference type="UCSC" id="uc008yhq.2">
    <molecule id="Q571G4-3"/>
    <property type="organism name" value="mouse"/>
</dbReference>
<dbReference type="AGR" id="MGI:2140902"/>
<dbReference type="CTD" id="132660"/>
<dbReference type="MGI" id="MGI:2140902">
    <property type="gene designation" value="Lin54"/>
</dbReference>
<dbReference type="VEuPathDB" id="HostDB:ENSMUSG00000035310"/>
<dbReference type="eggNOG" id="KOG1171">
    <property type="taxonomic scope" value="Eukaryota"/>
</dbReference>
<dbReference type="GeneTree" id="ENSGT00940000155881"/>
<dbReference type="InParanoid" id="Q571G4"/>
<dbReference type="OMA" id="XKPVVVN"/>
<dbReference type="OrthoDB" id="6283463at2759"/>
<dbReference type="PhylomeDB" id="Q571G4"/>
<dbReference type="TreeFam" id="TF313189"/>
<dbReference type="Reactome" id="R-MMU-1538133">
    <property type="pathway name" value="G0 and Early G1"/>
</dbReference>
<dbReference type="BioGRID-ORCS" id="231506">
    <property type="hits" value="22 hits in 77 CRISPR screens"/>
</dbReference>
<dbReference type="ChiTaRS" id="Lin54">
    <property type="organism name" value="mouse"/>
</dbReference>
<dbReference type="PRO" id="PR:Q571G4"/>
<dbReference type="Proteomes" id="UP000000589">
    <property type="component" value="Chromosome 5"/>
</dbReference>
<dbReference type="RNAct" id="Q571G4">
    <property type="molecule type" value="protein"/>
</dbReference>
<dbReference type="ExpressionAtlas" id="Q571G4">
    <property type="expression patterns" value="baseline and differential"/>
</dbReference>
<dbReference type="GO" id="GO:0090571">
    <property type="term" value="C:RNA polymerase II transcription repressor complex"/>
    <property type="evidence" value="ECO:0007669"/>
    <property type="project" value="Ensembl"/>
</dbReference>
<dbReference type="GO" id="GO:0046872">
    <property type="term" value="F:metal ion binding"/>
    <property type="evidence" value="ECO:0007669"/>
    <property type="project" value="UniProtKB-KW"/>
</dbReference>
<dbReference type="GO" id="GO:0003680">
    <property type="term" value="F:minor groove of adenine-thymine-rich DNA binding"/>
    <property type="evidence" value="ECO:0007669"/>
    <property type="project" value="Ensembl"/>
</dbReference>
<dbReference type="GO" id="GO:0001067">
    <property type="term" value="F:transcription regulatory region nucleic acid binding"/>
    <property type="evidence" value="ECO:0007669"/>
    <property type="project" value="Ensembl"/>
</dbReference>
<dbReference type="GO" id="GO:0034728">
    <property type="term" value="P:nucleosome organization"/>
    <property type="evidence" value="ECO:0007669"/>
    <property type="project" value="Ensembl"/>
</dbReference>
<dbReference type="InterPro" id="IPR005172">
    <property type="entry name" value="CRC"/>
</dbReference>
<dbReference type="InterPro" id="IPR028307">
    <property type="entry name" value="Lin-54_fam"/>
</dbReference>
<dbReference type="InterPro" id="IPR033467">
    <property type="entry name" value="Tesmin/TSO1-like_CXC"/>
</dbReference>
<dbReference type="PANTHER" id="PTHR12446:SF36">
    <property type="entry name" value="PROTEIN LIN-54 HOMOLOG"/>
    <property type="match status" value="1"/>
</dbReference>
<dbReference type="PANTHER" id="PTHR12446">
    <property type="entry name" value="TESMIN/TSO1-RELATED"/>
    <property type="match status" value="1"/>
</dbReference>
<dbReference type="Pfam" id="PF03638">
    <property type="entry name" value="TCR"/>
    <property type="match status" value="2"/>
</dbReference>
<dbReference type="SMART" id="SM01114">
    <property type="entry name" value="CXC"/>
    <property type="match status" value="2"/>
</dbReference>
<dbReference type="PROSITE" id="PS51634">
    <property type="entry name" value="CRC"/>
    <property type="match status" value="1"/>
</dbReference>
<comment type="function">
    <text evidence="2">Component of the DREAM complex, a multiprotein complex that can both act as a transcription activator or repressor depending on the context. In G0 phase, the complex binds to more than 800 promoters and is required for repression of E2F target genes. In S phase, the complex selectively binds to the promoters of G2/M genes whose products are required for mitosis and participates in their cell cycle dependent activation. In the complex, acts as a DNA-binding protein that binds the promoter of CDK1 in a sequence-specific manner. Specifically recognizes the consensus motif 5'-TTYRAA-3' in target DNA.</text>
</comment>
<comment type="subunit">
    <text evidence="1">Component of the DREAM complex (also named LINC complex) at least composed of E2F4, E2F5, LIN9, LIN37, LIN52, LIN54, MYBL1, MYBL2, RBL1, RBL2, RBBP4, RBL2, TFDP1 and TFDP2. The complex exists in quiescent cells where it represses cell cycle-dependent genes. It dissociates in S phase when LIN9, LIN37, LIN52 and LIN54 form a subcomplex that binds to MYBL2 (By similarity).</text>
</comment>
<comment type="subcellular location">
    <subcellularLocation>
        <location evidence="1">Nucleus</location>
    </subcellularLocation>
</comment>
<comment type="alternative products">
    <event type="alternative splicing"/>
    <isoform>
        <id>Q571G4-1</id>
        <name>1</name>
        <sequence type="displayed"/>
    </isoform>
    <isoform>
        <id>Q571G4-2</id>
        <name>2</name>
        <sequence type="described" ref="VSP_034277"/>
    </isoform>
    <isoform>
        <id>Q571G4-3</id>
        <name>3</name>
        <sequence type="described" ref="VSP_034278 VSP_034279"/>
    </isoform>
</comment>
<comment type="domain">
    <text evidence="2">The CRC domain mediates DNA-binding. It contains two CXC subdomains (joined by a flexible linker) which are both required for efficient association with target DNA. Each CXC subdomain coordinates three Zn(2+) ions.</text>
</comment>
<comment type="similarity">
    <text evidence="5">Belongs to the lin-54 family.</text>
</comment>
<comment type="sequence caution" evidence="5">
    <conflict type="miscellaneous discrepancy">
        <sequence resource="EMBL-CDS" id="AAI06127"/>
    </conflict>
    <text>Contaminating sequence. Potential poly-A sequence.</text>
</comment>
<comment type="sequence caution" evidence="5">
    <conflict type="erroneous initiation">
        <sequence resource="EMBL-CDS" id="BAD90150"/>
    </conflict>
    <text>Extended N-terminus.</text>
</comment>
<protein>
    <recommendedName>
        <fullName>Protein lin-54 homolog</fullName>
    </recommendedName>
</protein>
<keyword id="KW-0007">Acetylation</keyword>
<keyword id="KW-0010">Activator</keyword>
<keyword id="KW-0025">Alternative splicing</keyword>
<keyword id="KW-0131">Cell cycle</keyword>
<keyword id="KW-0238">DNA-binding</keyword>
<keyword id="KW-1017">Isopeptide bond</keyword>
<keyword id="KW-0479">Metal-binding</keyword>
<keyword id="KW-0539">Nucleus</keyword>
<keyword id="KW-0597">Phosphoprotein</keyword>
<keyword id="KW-1185">Reference proteome</keyword>
<keyword id="KW-0678">Repressor</keyword>
<keyword id="KW-0804">Transcription</keyword>
<keyword id="KW-0805">Transcription regulation</keyword>
<keyword id="KW-0832">Ubl conjugation</keyword>
<keyword id="KW-0862">Zinc</keyword>
<reference key="1">
    <citation type="submission" date="2005-02" db="EMBL/GenBank/DDBJ databases">
        <title>Prediction of the coding sequences of mouse homologues of KIAA gene. The complete nucleotide sequences of mouse KIAA-homologous cDNAs identified by screening of terminal sequences of cDNA clones randomly sampled from size-fractionated libraries.</title>
        <authorList>
            <person name="Okazaki N."/>
            <person name="Kikuno R.F."/>
            <person name="Ohara R."/>
            <person name="Inamoto S."/>
            <person name="Nagase T."/>
            <person name="Ohara O."/>
            <person name="Koga H."/>
        </authorList>
    </citation>
    <scope>NUCLEOTIDE SEQUENCE [LARGE SCALE MRNA] (ISOFORM 1)</scope>
    <source>
        <tissue>Spleen</tissue>
    </source>
</reference>
<reference key="2">
    <citation type="journal article" date="2005" name="Science">
        <title>The transcriptional landscape of the mammalian genome.</title>
        <authorList>
            <person name="Carninci P."/>
            <person name="Kasukawa T."/>
            <person name="Katayama S."/>
            <person name="Gough J."/>
            <person name="Frith M.C."/>
            <person name="Maeda N."/>
            <person name="Oyama R."/>
            <person name="Ravasi T."/>
            <person name="Lenhard B."/>
            <person name="Wells C."/>
            <person name="Kodzius R."/>
            <person name="Shimokawa K."/>
            <person name="Bajic V.B."/>
            <person name="Brenner S.E."/>
            <person name="Batalov S."/>
            <person name="Forrest A.R."/>
            <person name="Zavolan M."/>
            <person name="Davis M.J."/>
            <person name="Wilming L.G."/>
            <person name="Aidinis V."/>
            <person name="Allen J.E."/>
            <person name="Ambesi-Impiombato A."/>
            <person name="Apweiler R."/>
            <person name="Aturaliya R.N."/>
            <person name="Bailey T.L."/>
            <person name="Bansal M."/>
            <person name="Baxter L."/>
            <person name="Beisel K.W."/>
            <person name="Bersano T."/>
            <person name="Bono H."/>
            <person name="Chalk A.M."/>
            <person name="Chiu K.P."/>
            <person name="Choudhary V."/>
            <person name="Christoffels A."/>
            <person name="Clutterbuck D.R."/>
            <person name="Crowe M.L."/>
            <person name="Dalla E."/>
            <person name="Dalrymple B.P."/>
            <person name="de Bono B."/>
            <person name="Della Gatta G."/>
            <person name="di Bernardo D."/>
            <person name="Down T."/>
            <person name="Engstrom P."/>
            <person name="Fagiolini M."/>
            <person name="Faulkner G."/>
            <person name="Fletcher C.F."/>
            <person name="Fukushima T."/>
            <person name="Furuno M."/>
            <person name="Futaki S."/>
            <person name="Gariboldi M."/>
            <person name="Georgii-Hemming P."/>
            <person name="Gingeras T.R."/>
            <person name="Gojobori T."/>
            <person name="Green R.E."/>
            <person name="Gustincich S."/>
            <person name="Harbers M."/>
            <person name="Hayashi Y."/>
            <person name="Hensch T.K."/>
            <person name="Hirokawa N."/>
            <person name="Hill D."/>
            <person name="Huminiecki L."/>
            <person name="Iacono M."/>
            <person name="Ikeo K."/>
            <person name="Iwama A."/>
            <person name="Ishikawa T."/>
            <person name="Jakt M."/>
            <person name="Kanapin A."/>
            <person name="Katoh M."/>
            <person name="Kawasawa Y."/>
            <person name="Kelso J."/>
            <person name="Kitamura H."/>
            <person name="Kitano H."/>
            <person name="Kollias G."/>
            <person name="Krishnan S.P."/>
            <person name="Kruger A."/>
            <person name="Kummerfeld S.K."/>
            <person name="Kurochkin I.V."/>
            <person name="Lareau L.F."/>
            <person name="Lazarevic D."/>
            <person name="Lipovich L."/>
            <person name="Liu J."/>
            <person name="Liuni S."/>
            <person name="McWilliam S."/>
            <person name="Madan Babu M."/>
            <person name="Madera M."/>
            <person name="Marchionni L."/>
            <person name="Matsuda H."/>
            <person name="Matsuzawa S."/>
            <person name="Miki H."/>
            <person name="Mignone F."/>
            <person name="Miyake S."/>
            <person name="Morris K."/>
            <person name="Mottagui-Tabar S."/>
            <person name="Mulder N."/>
            <person name="Nakano N."/>
            <person name="Nakauchi H."/>
            <person name="Ng P."/>
            <person name="Nilsson R."/>
            <person name="Nishiguchi S."/>
            <person name="Nishikawa S."/>
            <person name="Nori F."/>
            <person name="Ohara O."/>
            <person name="Okazaki Y."/>
            <person name="Orlando V."/>
            <person name="Pang K.C."/>
            <person name="Pavan W.J."/>
            <person name="Pavesi G."/>
            <person name="Pesole G."/>
            <person name="Petrovsky N."/>
            <person name="Piazza S."/>
            <person name="Reed J."/>
            <person name="Reid J.F."/>
            <person name="Ring B.Z."/>
            <person name="Ringwald M."/>
            <person name="Rost B."/>
            <person name="Ruan Y."/>
            <person name="Salzberg S.L."/>
            <person name="Sandelin A."/>
            <person name="Schneider C."/>
            <person name="Schoenbach C."/>
            <person name="Sekiguchi K."/>
            <person name="Semple C.A."/>
            <person name="Seno S."/>
            <person name="Sessa L."/>
            <person name="Sheng Y."/>
            <person name="Shibata Y."/>
            <person name="Shimada H."/>
            <person name="Shimada K."/>
            <person name="Silva D."/>
            <person name="Sinclair B."/>
            <person name="Sperling S."/>
            <person name="Stupka E."/>
            <person name="Sugiura K."/>
            <person name="Sultana R."/>
            <person name="Takenaka Y."/>
            <person name="Taki K."/>
            <person name="Tammoja K."/>
            <person name="Tan S.L."/>
            <person name="Tang S."/>
            <person name="Taylor M.S."/>
            <person name="Tegner J."/>
            <person name="Teichmann S.A."/>
            <person name="Ueda H.R."/>
            <person name="van Nimwegen E."/>
            <person name="Verardo R."/>
            <person name="Wei C.L."/>
            <person name="Yagi K."/>
            <person name="Yamanishi H."/>
            <person name="Zabarovsky E."/>
            <person name="Zhu S."/>
            <person name="Zimmer A."/>
            <person name="Hide W."/>
            <person name="Bult C."/>
            <person name="Grimmond S.M."/>
            <person name="Teasdale R.D."/>
            <person name="Liu E.T."/>
            <person name="Brusic V."/>
            <person name="Quackenbush J."/>
            <person name="Wahlestedt C."/>
            <person name="Mattick J.S."/>
            <person name="Hume D.A."/>
            <person name="Kai C."/>
            <person name="Sasaki D."/>
            <person name="Tomaru Y."/>
            <person name="Fukuda S."/>
            <person name="Kanamori-Katayama M."/>
            <person name="Suzuki M."/>
            <person name="Aoki J."/>
            <person name="Arakawa T."/>
            <person name="Iida J."/>
            <person name="Imamura K."/>
            <person name="Itoh M."/>
            <person name="Kato T."/>
            <person name="Kawaji H."/>
            <person name="Kawagashira N."/>
            <person name="Kawashima T."/>
            <person name="Kojima M."/>
            <person name="Kondo S."/>
            <person name="Konno H."/>
            <person name="Nakano K."/>
            <person name="Ninomiya N."/>
            <person name="Nishio T."/>
            <person name="Okada M."/>
            <person name="Plessy C."/>
            <person name="Shibata K."/>
            <person name="Shiraki T."/>
            <person name="Suzuki S."/>
            <person name="Tagami M."/>
            <person name="Waki K."/>
            <person name="Watahiki A."/>
            <person name="Okamura-Oho Y."/>
            <person name="Suzuki H."/>
            <person name="Kawai J."/>
            <person name="Hayashizaki Y."/>
        </authorList>
    </citation>
    <scope>NUCLEOTIDE SEQUENCE [LARGE SCALE MRNA] (ISOFORMS 1; 2 AND 3)</scope>
    <source>
        <strain>C57BL/6J</strain>
        <tissue>Head</tissue>
        <tissue>Testis</tissue>
    </source>
</reference>
<reference key="3">
    <citation type="journal article" date="2004" name="Genome Res.">
        <title>The status, quality, and expansion of the NIH full-length cDNA project: the Mammalian Gene Collection (MGC).</title>
        <authorList>
            <consortium name="The MGC Project Team"/>
        </authorList>
    </citation>
    <scope>NUCLEOTIDE SEQUENCE [LARGE SCALE MRNA] OF 66-749 (ISOFORM 1)</scope>
    <source>
        <strain>FVB/N</strain>
        <tissue>Brain</tissue>
        <tissue>Mammary tumor</tissue>
    </source>
</reference>
<name>LIN54_MOUSE</name>
<organism>
    <name type="scientific">Mus musculus</name>
    <name type="common">Mouse</name>
    <dbReference type="NCBI Taxonomy" id="10090"/>
    <lineage>
        <taxon>Eukaryota</taxon>
        <taxon>Metazoa</taxon>
        <taxon>Chordata</taxon>
        <taxon>Craniata</taxon>
        <taxon>Vertebrata</taxon>
        <taxon>Euteleostomi</taxon>
        <taxon>Mammalia</taxon>
        <taxon>Eutheria</taxon>
        <taxon>Euarchontoglires</taxon>
        <taxon>Glires</taxon>
        <taxon>Rodentia</taxon>
        <taxon>Myomorpha</taxon>
        <taxon>Muroidea</taxon>
        <taxon>Muridae</taxon>
        <taxon>Murinae</taxon>
        <taxon>Mus</taxon>
        <taxon>Mus</taxon>
    </lineage>
</organism>
<evidence type="ECO:0000250" key="1"/>
<evidence type="ECO:0000250" key="2">
    <source>
        <dbReference type="UniProtKB" id="Q6MZP7"/>
    </source>
</evidence>
<evidence type="ECO:0000255" key="3">
    <source>
        <dbReference type="PROSITE-ProRule" id="PRU00971"/>
    </source>
</evidence>
<evidence type="ECO:0000303" key="4">
    <source>
    </source>
</evidence>
<evidence type="ECO:0000305" key="5"/>
<accession>Q571G4</accession>
<accession>A0JLY2</accession>
<accession>Q3KQN0</accession>
<accession>Q3UYW5</accession>
<accession>Q8BMU8</accession>
<accession>Q8C107</accession>
<gene>
    <name type="primary">Lin54</name>
    <name type="synonym">Kiaa2037</name>
</gene>
<feature type="chain" id="PRO_0000341390" description="Protein lin-54 homolog">
    <location>
        <begin position="1"/>
        <end position="749"/>
    </location>
</feature>
<feature type="domain" description="CRC" evidence="3">
    <location>
        <begin position="521"/>
        <end position="634"/>
    </location>
</feature>
<feature type="region of interest" description="DNA-binding" evidence="2">
    <location>
        <begin position="523"/>
        <end position="536"/>
    </location>
</feature>
<feature type="region of interest" description="Linker" evidence="2">
    <location>
        <begin position="583"/>
        <end position="596"/>
    </location>
</feature>
<feature type="region of interest" description="DNA-binding" evidence="2">
    <location>
        <begin position="599"/>
        <end position="612"/>
    </location>
</feature>
<feature type="binding site" evidence="2">
    <location>
        <position position="525"/>
    </location>
    <ligand>
        <name>Zn(2+)</name>
        <dbReference type="ChEBI" id="CHEBI:29105"/>
        <label>1</label>
    </ligand>
</feature>
<feature type="binding site" evidence="2">
    <location>
        <position position="525"/>
    </location>
    <ligand>
        <name>Zn(2+)</name>
        <dbReference type="ChEBI" id="CHEBI:29105"/>
        <label>2</label>
    </ligand>
</feature>
<feature type="binding site" evidence="2">
    <location>
        <position position="527"/>
    </location>
    <ligand>
        <name>Zn(2+)</name>
        <dbReference type="ChEBI" id="CHEBI:29105"/>
        <label>1</label>
    </ligand>
</feature>
<feature type="binding site" evidence="2">
    <location>
        <position position="532"/>
    </location>
    <ligand>
        <name>Zn(2+)</name>
        <dbReference type="ChEBI" id="CHEBI:29105"/>
        <label>1</label>
    </ligand>
</feature>
<feature type="binding site" evidence="2">
    <location>
        <position position="532"/>
    </location>
    <ligand>
        <name>Zn(2+)</name>
        <dbReference type="ChEBI" id="CHEBI:29105"/>
        <label>3</label>
    </ligand>
</feature>
<feature type="binding site" evidence="2">
    <location>
        <position position="537"/>
    </location>
    <ligand>
        <name>Zn(2+)</name>
        <dbReference type="ChEBI" id="CHEBI:29105"/>
        <label>1</label>
    </ligand>
</feature>
<feature type="binding site" evidence="2">
    <location>
        <position position="539"/>
    </location>
    <ligand>
        <name>Zn(2+)</name>
        <dbReference type="ChEBI" id="CHEBI:29105"/>
        <label>2</label>
    </ligand>
</feature>
<feature type="binding site" evidence="2">
    <location>
        <position position="546"/>
    </location>
    <ligand>
        <name>Zn(2+)</name>
        <dbReference type="ChEBI" id="CHEBI:29105"/>
        <label>2</label>
    </ligand>
</feature>
<feature type="binding site" evidence="2">
    <location>
        <position position="546"/>
    </location>
    <ligand>
        <name>Zn(2+)</name>
        <dbReference type="ChEBI" id="CHEBI:29105"/>
        <label>3</label>
    </ligand>
</feature>
<feature type="binding site" evidence="2">
    <location>
        <position position="549"/>
    </location>
    <ligand>
        <name>Zn(2+)</name>
        <dbReference type="ChEBI" id="CHEBI:29105"/>
        <label>2</label>
    </ligand>
</feature>
<feature type="binding site" evidence="2">
    <location>
        <position position="551"/>
    </location>
    <ligand>
        <name>Zn(2+)</name>
        <dbReference type="ChEBI" id="CHEBI:29105"/>
        <label>3</label>
    </ligand>
</feature>
<feature type="binding site" evidence="2">
    <location>
        <position position="554"/>
    </location>
    <ligand>
        <name>Zn(2+)</name>
        <dbReference type="ChEBI" id="CHEBI:29105"/>
        <label>3</label>
    </ligand>
</feature>
<feature type="binding site" evidence="2">
    <location>
        <position position="599"/>
    </location>
    <ligand>
        <name>Zn(2+)</name>
        <dbReference type="ChEBI" id="CHEBI:29105"/>
        <label>4</label>
    </ligand>
</feature>
<feature type="binding site" evidence="2">
    <location>
        <position position="599"/>
    </location>
    <ligand>
        <name>Zn(2+)</name>
        <dbReference type="ChEBI" id="CHEBI:29105"/>
        <label>5</label>
    </ligand>
</feature>
<feature type="binding site" evidence="2">
    <location>
        <position position="601"/>
    </location>
    <ligand>
        <name>Zn(2+)</name>
        <dbReference type="ChEBI" id="CHEBI:29105"/>
        <label>4</label>
    </ligand>
</feature>
<feature type="binding site" evidence="2">
    <location>
        <position position="606"/>
    </location>
    <ligand>
        <name>Zn(2+)</name>
        <dbReference type="ChEBI" id="CHEBI:29105"/>
        <label>4</label>
    </ligand>
</feature>
<feature type="binding site" evidence="2">
    <location>
        <position position="606"/>
    </location>
    <ligand>
        <name>Zn(2+)</name>
        <dbReference type="ChEBI" id="CHEBI:29105"/>
        <label>6</label>
    </ligand>
</feature>
<feature type="binding site" evidence="2">
    <location>
        <position position="611"/>
    </location>
    <ligand>
        <name>Zn(2+)</name>
        <dbReference type="ChEBI" id="CHEBI:29105"/>
        <label>4</label>
    </ligand>
</feature>
<feature type="binding site" evidence="2">
    <location>
        <position position="613"/>
    </location>
    <ligand>
        <name>Zn(2+)</name>
        <dbReference type="ChEBI" id="CHEBI:29105"/>
        <label>5</label>
    </ligand>
</feature>
<feature type="binding site" evidence="2">
    <location>
        <position position="620"/>
    </location>
    <ligand>
        <name>Zn(2+)</name>
        <dbReference type="ChEBI" id="CHEBI:29105"/>
        <label>5</label>
    </ligand>
</feature>
<feature type="binding site" evidence="2">
    <location>
        <position position="620"/>
    </location>
    <ligand>
        <name>Zn(2+)</name>
        <dbReference type="ChEBI" id="CHEBI:29105"/>
        <label>6</label>
    </ligand>
</feature>
<feature type="binding site" evidence="2">
    <location>
        <position position="624"/>
    </location>
    <ligand>
        <name>Zn(2+)</name>
        <dbReference type="ChEBI" id="CHEBI:29105"/>
        <label>5</label>
    </ligand>
</feature>
<feature type="binding site" evidence="2">
    <location>
        <position position="626"/>
    </location>
    <ligand>
        <name>Zn(2+)</name>
        <dbReference type="ChEBI" id="CHEBI:29105"/>
        <label>6</label>
    </ligand>
</feature>
<feature type="binding site" evidence="2">
    <location>
        <position position="629"/>
    </location>
    <ligand>
        <name>Zn(2+)</name>
        <dbReference type="ChEBI" id="CHEBI:29105"/>
        <label>6</label>
    </ligand>
</feature>
<feature type="site" description="Critical for interaction with target DNA" evidence="2">
    <location>
        <position position="536"/>
    </location>
</feature>
<feature type="site" description="Interaction with DNA" evidence="2">
    <location>
        <position position="574"/>
    </location>
</feature>
<feature type="site" description="Critical for interaction with target DNA" evidence="2">
    <location>
        <position position="610"/>
    </location>
</feature>
<feature type="modified residue" description="N6-acetyllysine" evidence="2">
    <location>
        <position position="244"/>
    </location>
</feature>
<feature type="modified residue" description="N6-acetyllysine" evidence="2">
    <location>
        <position position="249"/>
    </location>
</feature>
<feature type="modified residue" description="Phosphoserine" evidence="2">
    <location>
        <position position="264"/>
    </location>
</feature>
<feature type="modified residue" description="Phosphoserine" evidence="2">
    <location>
        <position position="282"/>
    </location>
</feature>
<feature type="modified residue" description="Phosphoserine" evidence="2">
    <location>
        <position position="310"/>
    </location>
</feature>
<feature type="modified residue" description="Phosphoserine" evidence="2">
    <location>
        <position position="314"/>
    </location>
</feature>
<feature type="modified residue" description="Phosphoserine" evidence="2">
    <location>
        <position position="635"/>
    </location>
</feature>
<feature type="cross-link" description="Glycyl lysine isopeptide (Lys-Gly) (interchain with G-Cter in SUMO2)" evidence="2">
    <location>
        <position position="139"/>
    </location>
</feature>
<feature type="cross-link" description="Glycyl lysine isopeptide (Lys-Gly) (interchain with G-Cter in SUMO2)" evidence="2">
    <location>
        <position position="357"/>
    </location>
</feature>
<feature type="cross-link" description="Glycyl lysine isopeptide (Lys-Gly) (interchain with G-Cter in SUMO2)" evidence="2">
    <location>
        <position position="639"/>
    </location>
</feature>
<feature type="cross-link" description="Glycyl lysine isopeptide (Lys-Gly) (interchain with G-Cter in SUMO2)" evidence="2">
    <location>
        <position position="659"/>
    </location>
</feature>
<feature type="cross-link" description="Glycyl lysine isopeptide (Lys-Gly) (interchain with G-Cter in SUMO2)" evidence="2">
    <location>
        <position position="661"/>
    </location>
</feature>
<feature type="splice variant" id="VSP_034277" description="In isoform 2." evidence="4">
    <location>
        <begin position="1"/>
        <end position="330"/>
    </location>
</feature>
<feature type="splice variant" id="VSP_034278" description="In isoform 3." evidence="4">
    <original>IAKKPRTPT</original>
    <variation>VKTKKGHIT</variation>
    <location>
        <begin position="229"/>
        <end position="237"/>
    </location>
</feature>
<feature type="splice variant" id="VSP_034279" description="In isoform 3." evidence="4">
    <location>
        <begin position="238"/>
        <end position="749"/>
    </location>
</feature>